<dbReference type="EMBL" id="AP007255">
    <property type="protein sequence ID" value="BAE53028.1"/>
    <property type="molecule type" value="Genomic_DNA"/>
</dbReference>
<dbReference type="RefSeq" id="WP_011386573.1">
    <property type="nucleotide sequence ID" value="NC_007626.1"/>
</dbReference>
<dbReference type="SMR" id="Q2VZE7"/>
<dbReference type="STRING" id="342108.amb4224"/>
<dbReference type="KEGG" id="mag:amb4224"/>
<dbReference type="HOGENOM" id="CLU_128074_1_0_5"/>
<dbReference type="OrthoDB" id="9795226at2"/>
<dbReference type="Proteomes" id="UP000007058">
    <property type="component" value="Chromosome"/>
</dbReference>
<dbReference type="GO" id="GO:0070987">
    <property type="term" value="P:error-free translesion synthesis"/>
    <property type="evidence" value="ECO:0007669"/>
    <property type="project" value="TreeGrafter"/>
</dbReference>
<dbReference type="Gene3D" id="2.60.40.1470">
    <property type="entry name" value="ApaG domain"/>
    <property type="match status" value="1"/>
</dbReference>
<dbReference type="HAMAP" id="MF_00791">
    <property type="entry name" value="ApaG"/>
    <property type="match status" value="1"/>
</dbReference>
<dbReference type="InterPro" id="IPR007474">
    <property type="entry name" value="ApaG_domain"/>
</dbReference>
<dbReference type="InterPro" id="IPR036767">
    <property type="entry name" value="ApaG_sf"/>
</dbReference>
<dbReference type="InterPro" id="IPR023065">
    <property type="entry name" value="Uncharacterised_ApaG"/>
</dbReference>
<dbReference type="NCBIfam" id="NF003967">
    <property type="entry name" value="PRK05461.1"/>
    <property type="match status" value="1"/>
</dbReference>
<dbReference type="PANTHER" id="PTHR14289">
    <property type="entry name" value="F-BOX ONLY PROTEIN 3"/>
    <property type="match status" value="1"/>
</dbReference>
<dbReference type="PANTHER" id="PTHR14289:SF16">
    <property type="entry name" value="POLYMERASE DELTA-INTERACTING PROTEIN 2"/>
    <property type="match status" value="1"/>
</dbReference>
<dbReference type="Pfam" id="PF04379">
    <property type="entry name" value="DUF525"/>
    <property type="match status" value="1"/>
</dbReference>
<dbReference type="SUPFAM" id="SSF110069">
    <property type="entry name" value="ApaG-like"/>
    <property type="match status" value="1"/>
</dbReference>
<dbReference type="PROSITE" id="PS51087">
    <property type="entry name" value="APAG"/>
    <property type="match status" value="1"/>
</dbReference>
<evidence type="ECO:0000255" key="1">
    <source>
        <dbReference type="HAMAP-Rule" id="MF_00791"/>
    </source>
</evidence>
<gene>
    <name evidence="1" type="primary">apaG</name>
    <name type="ordered locus">amb4224</name>
</gene>
<protein>
    <recommendedName>
        <fullName evidence="1">Protein ApaG</fullName>
    </recommendedName>
</protein>
<organism>
    <name type="scientific">Paramagnetospirillum magneticum (strain ATCC 700264 / AMB-1)</name>
    <name type="common">Magnetospirillum magneticum</name>
    <dbReference type="NCBI Taxonomy" id="342108"/>
    <lineage>
        <taxon>Bacteria</taxon>
        <taxon>Pseudomonadati</taxon>
        <taxon>Pseudomonadota</taxon>
        <taxon>Alphaproteobacteria</taxon>
        <taxon>Rhodospirillales</taxon>
        <taxon>Magnetospirillaceae</taxon>
        <taxon>Paramagnetospirillum</taxon>
    </lineage>
</organism>
<name>APAG_PARM1</name>
<reference key="1">
    <citation type="journal article" date="2005" name="DNA Res.">
        <title>Complete genome sequence of the facultative anaerobic magnetotactic bacterium Magnetospirillum sp. strain AMB-1.</title>
        <authorList>
            <person name="Matsunaga T."/>
            <person name="Okamura Y."/>
            <person name="Fukuda Y."/>
            <person name="Wahyudi A.T."/>
            <person name="Murase Y."/>
            <person name="Takeyama H."/>
        </authorList>
    </citation>
    <scope>NUCLEOTIDE SEQUENCE [LARGE SCALE GENOMIC DNA]</scope>
    <source>
        <strain>ATCC 700264 / AMB-1</strain>
    </source>
</reference>
<sequence>MYSQTTRDIEVTVKPFYLDDQSSPGDNHFVWAYRVRIVNKGSRTVQLLRRHWVITDAIGRVQEVKGPGVVGEQPVLRPGDAYEYTSGTPLPTPSGIMVGTYEMEDEDGSAFDIAIPAFSLDSPHEKPRLN</sequence>
<proteinExistence type="inferred from homology"/>
<feature type="chain" id="PRO_1000083625" description="Protein ApaG">
    <location>
        <begin position="1"/>
        <end position="130"/>
    </location>
</feature>
<feature type="domain" description="ApaG" evidence="1">
    <location>
        <begin position="3"/>
        <end position="127"/>
    </location>
</feature>
<accession>Q2VZE7</accession>